<reference key="1">
    <citation type="journal article" date="2008" name="DNA Res.">
        <title>Comparative genome analysis of Lactobacillus reuteri and Lactobacillus fermentum reveal a genomic island for reuterin and cobalamin production.</title>
        <authorList>
            <person name="Morita H."/>
            <person name="Toh H."/>
            <person name="Fukuda S."/>
            <person name="Horikawa H."/>
            <person name="Oshima K."/>
            <person name="Suzuki T."/>
            <person name="Murakami M."/>
            <person name="Hisamatsu S."/>
            <person name="Kato Y."/>
            <person name="Takizawa T."/>
            <person name="Fukuoka H."/>
            <person name="Yoshimura T."/>
            <person name="Itoh K."/>
            <person name="O'Sullivan D.J."/>
            <person name="McKay L.L."/>
            <person name="Ohno H."/>
            <person name="Kikuchi J."/>
            <person name="Masaoka T."/>
            <person name="Hattori M."/>
        </authorList>
    </citation>
    <scope>NUCLEOTIDE SEQUENCE [LARGE SCALE GENOMIC DNA]</scope>
    <source>
        <strain>NBRC 3956 / LMG 18251</strain>
    </source>
</reference>
<keyword id="KW-0028">Amino-acid biosynthesis</keyword>
<keyword id="KW-0057">Aromatic amino acid biosynthesis</keyword>
<keyword id="KW-0963">Cytoplasm</keyword>
<keyword id="KW-1185">Reference proteome</keyword>
<keyword id="KW-0808">Transferase</keyword>
<dbReference type="EC" id="2.5.1.19" evidence="1"/>
<dbReference type="EMBL" id="AP008937">
    <property type="protein sequence ID" value="BAG27442.1"/>
    <property type="molecule type" value="Genomic_DNA"/>
</dbReference>
<dbReference type="RefSeq" id="WP_012391352.1">
    <property type="nucleotide sequence ID" value="NC_010610.1"/>
</dbReference>
<dbReference type="SMR" id="B2GCR0"/>
<dbReference type="KEGG" id="lfe:LAF_1106"/>
<dbReference type="eggNOG" id="COG0128">
    <property type="taxonomic scope" value="Bacteria"/>
</dbReference>
<dbReference type="HOGENOM" id="CLU_024321_0_1_9"/>
<dbReference type="UniPathway" id="UPA00053">
    <property type="reaction ID" value="UER00089"/>
</dbReference>
<dbReference type="Proteomes" id="UP000001697">
    <property type="component" value="Chromosome"/>
</dbReference>
<dbReference type="GO" id="GO:0005737">
    <property type="term" value="C:cytoplasm"/>
    <property type="evidence" value="ECO:0007669"/>
    <property type="project" value="UniProtKB-SubCell"/>
</dbReference>
<dbReference type="GO" id="GO:0003866">
    <property type="term" value="F:3-phosphoshikimate 1-carboxyvinyltransferase activity"/>
    <property type="evidence" value="ECO:0007669"/>
    <property type="project" value="UniProtKB-UniRule"/>
</dbReference>
<dbReference type="GO" id="GO:0008652">
    <property type="term" value="P:amino acid biosynthetic process"/>
    <property type="evidence" value="ECO:0007669"/>
    <property type="project" value="UniProtKB-KW"/>
</dbReference>
<dbReference type="GO" id="GO:0009073">
    <property type="term" value="P:aromatic amino acid family biosynthetic process"/>
    <property type="evidence" value="ECO:0007669"/>
    <property type="project" value="UniProtKB-KW"/>
</dbReference>
<dbReference type="GO" id="GO:0009423">
    <property type="term" value="P:chorismate biosynthetic process"/>
    <property type="evidence" value="ECO:0007669"/>
    <property type="project" value="UniProtKB-UniRule"/>
</dbReference>
<dbReference type="CDD" id="cd01556">
    <property type="entry name" value="EPSP_synthase"/>
    <property type="match status" value="1"/>
</dbReference>
<dbReference type="FunFam" id="3.65.10.10:FF:000005">
    <property type="entry name" value="3-phosphoshikimate 1-carboxyvinyltransferase"/>
    <property type="match status" value="1"/>
</dbReference>
<dbReference type="Gene3D" id="3.65.10.10">
    <property type="entry name" value="Enolpyruvate transferase domain"/>
    <property type="match status" value="2"/>
</dbReference>
<dbReference type="HAMAP" id="MF_00210">
    <property type="entry name" value="EPSP_synth"/>
    <property type="match status" value="1"/>
</dbReference>
<dbReference type="InterPro" id="IPR001986">
    <property type="entry name" value="Enolpyruvate_Tfrase_dom"/>
</dbReference>
<dbReference type="InterPro" id="IPR036968">
    <property type="entry name" value="Enolpyruvate_Tfrase_sf"/>
</dbReference>
<dbReference type="InterPro" id="IPR006264">
    <property type="entry name" value="EPSP_synthase"/>
</dbReference>
<dbReference type="InterPro" id="IPR023193">
    <property type="entry name" value="EPSP_synthase_CS"/>
</dbReference>
<dbReference type="InterPro" id="IPR013792">
    <property type="entry name" value="RNA3'P_cycl/enolpyr_Trfase_a/b"/>
</dbReference>
<dbReference type="NCBIfam" id="TIGR01356">
    <property type="entry name" value="aroA"/>
    <property type="match status" value="1"/>
</dbReference>
<dbReference type="PANTHER" id="PTHR21090">
    <property type="entry name" value="AROM/DEHYDROQUINATE SYNTHASE"/>
    <property type="match status" value="1"/>
</dbReference>
<dbReference type="PANTHER" id="PTHR21090:SF5">
    <property type="entry name" value="PENTAFUNCTIONAL AROM POLYPEPTIDE"/>
    <property type="match status" value="1"/>
</dbReference>
<dbReference type="Pfam" id="PF00275">
    <property type="entry name" value="EPSP_synthase"/>
    <property type="match status" value="1"/>
</dbReference>
<dbReference type="PIRSF" id="PIRSF000505">
    <property type="entry name" value="EPSPS"/>
    <property type="match status" value="1"/>
</dbReference>
<dbReference type="SUPFAM" id="SSF55205">
    <property type="entry name" value="EPT/RTPC-like"/>
    <property type="match status" value="1"/>
</dbReference>
<dbReference type="PROSITE" id="PS00104">
    <property type="entry name" value="EPSP_SYNTHASE_1"/>
    <property type="match status" value="1"/>
</dbReference>
<dbReference type="PROSITE" id="PS00885">
    <property type="entry name" value="EPSP_SYNTHASE_2"/>
    <property type="match status" value="1"/>
</dbReference>
<evidence type="ECO:0000255" key="1">
    <source>
        <dbReference type="HAMAP-Rule" id="MF_00210"/>
    </source>
</evidence>
<feature type="chain" id="PRO_1000099710" description="3-phosphoshikimate 1-carboxyvinyltransferase">
    <location>
        <begin position="1"/>
        <end position="432"/>
    </location>
</feature>
<feature type="active site" description="Proton acceptor" evidence="1">
    <location>
        <position position="316"/>
    </location>
</feature>
<feature type="binding site" evidence="1">
    <location>
        <position position="23"/>
    </location>
    <ligand>
        <name>3-phosphoshikimate</name>
        <dbReference type="ChEBI" id="CHEBI:145989"/>
    </ligand>
</feature>
<feature type="binding site" evidence="1">
    <location>
        <position position="23"/>
    </location>
    <ligand>
        <name>phosphoenolpyruvate</name>
        <dbReference type="ChEBI" id="CHEBI:58702"/>
    </ligand>
</feature>
<feature type="binding site" evidence="1">
    <location>
        <position position="24"/>
    </location>
    <ligand>
        <name>3-phosphoshikimate</name>
        <dbReference type="ChEBI" id="CHEBI:145989"/>
    </ligand>
</feature>
<feature type="binding site" evidence="1">
    <location>
        <position position="28"/>
    </location>
    <ligand>
        <name>3-phosphoshikimate</name>
        <dbReference type="ChEBI" id="CHEBI:145989"/>
    </ligand>
</feature>
<feature type="binding site" evidence="1">
    <location>
        <position position="95"/>
    </location>
    <ligand>
        <name>phosphoenolpyruvate</name>
        <dbReference type="ChEBI" id="CHEBI:58702"/>
    </ligand>
</feature>
<feature type="binding site" evidence="1">
    <location>
        <position position="123"/>
    </location>
    <ligand>
        <name>phosphoenolpyruvate</name>
        <dbReference type="ChEBI" id="CHEBI:58702"/>
    </ligand>
</feature>
<feature type="binding site" evidence="1">
    <location>
        <position position="167"/>
    </location>
    <ligand>
        <name>3-phosphoshikimate</name>
        <dbReference type="ChEBI" id="CHEBI:145989"/>
    </ligand>
</feature>
<feature type="binding site" evidence="1">
    <location>
        <position position="169"/>
    </location>
    <ligand>
        <name>3-phosphoshikimate</name>
        <dbReference type="ChEBI" id="CHEBI:145989"/>
    </ligand>
</feature>
<feature type="binding site" evidence="1">
    <location>
        <position position="169"/>
    </location>
    <ligand>
        <name>phosphoenolpyruvate</name>
        <dbReference type="ChEBI" id="CHEBI:58702"/>
    </ligand>
</feature>
<feature type="binding site" evidence="1">
    <location>
        <position position="316"/>
    </location>
    <ligand>
        <name>3-phosphoshikimate</name>
        <dbReference type="ChEBI" id="CHEBI:145989"/>
    </ligand>
</feature>
<feature type="binding site" evidence="1">
    <location>
        <position position="343"/>
    </location>
    <ligand>
        <name>3-phosphoshikimate</name>
        <dbReference type="ChEBI" id="CHEBI:145989"/>
    </ligand>
</feature>
<feature type="binding site" evidence="1">
    <location>
        <position position="347"/>
    </location>
    <ligand>
        <name>phosphoenolpyruvate</name>
        <dbReference type="ChEBI" id="CHEBI:58702"/>
    </ligand>
</feature>
<feature type="binding site" evidence="1">
    <location>
        <position position="391"/>
    </location>
    <ligand>
        <name>phosphoenolpyruvate</name>
        <dbReference type="ChEBI" id="CHEBI:58702"/>
    </ligand>
</feature>
<name>AROA_LIMF3</name>
<gene>
    <name evidence="1" type="primary">aroA</name>
    <name type="ordered locus">LAF_1106</name>
</gene>
<accession>B2GCR0</accession>
<proteinExistence type="inferred from homology"/>
<protein>
    <recommendedName>
        <fullName evidence="1">3-phosphoshikimate 1-carboxyvinyltransferase</fullName>
        <ecNumber evidence="1">2.5.1.19</ecNumber>
    </recommendedName>
    <alternativeName>
        <fullName evidence="1">5-enolpyruvylshikimate-3-phosphate synthase</fullName>
        <shortName evidence="1">EPSP synthase</shortName>
        <shortName evidence="1">EPSPS</shortName>
    </alternativeName>
</protein>
<sequence length="432" mass="45283">MQKRALTINSRGLNGELAVPGDKSISHRALMIGALSEGTTVIDHFLVGEDCLSTLRALQDLGVEIERKGEHVEVIGRGIAGLVEPAAPLQMNNSGTSTRLLMGILAGQSFTSQLVGDASLSRRPMKRVQGPLARLGAQIGLSEAGTLPATVVGHPLQGARVKLEVASAQIKSAVILAALQAQGSTTVSEPLPTRDHTERLLKAFGANLTVDRAANSITVTPGARLVGQEVLVPGDPSSAAFFLVAGAVIANSHLTVKDVCLNPTRTGLIRVLKKMGARLSIKETASGGEPLGDVTIQTSQLRAVTVTAKDVPDLIDELPLVALLAACADGVSEISGAGELRVKETDRIQTVAELFLQLGVDVEERPDGWRIVGRPNWQVQKPNLNSHGDHRLGMLAAVAALRSTTPLFLIDPDAVAVSYPSFFADLAKLGGA</sequence>
<organism>
    <name type="scientific">Limosilactobacillus fermentum (strain NBRC 3956 / LMG 18251)</name>
    <name type="common">Lactobacillus fermentum</name>
    <dbReference type="NCBI Taxonomy" id="334390"/>
    <lineage>
        <taxon>Bacteria</taxon>
        <taxon>Bacillati</taxon>
        <taxon>Bacillota</taxon>
        <taxon>Bacilli</taxon>
        <taxon>Lactobacillales</taxon>
        <taxon>Lactobacillaceae</taxon>
        <taxon>Limosilactobacillus</taxon>
    </lineage>
</organism>
<comment type="function">
    <text evidence="1">Catalyzes the transfer of the enolpyruvyl moiety of phosphoenolpyruvate (PEP) to the 5-hydroxyl of shikimate-3-phosphate (S3P) to produce enolpyruvyl shikimate-3-phosphate and inorganic phosphate.</text>
</comment>
<comment type="catalytic activity">
    <reaction evidence="1">
        <text>3-phosphoshikimate + phosphoenolpyruvate = 5-O-(1-carboxyvinyl)-3-phosphoshikimate + phosphate</text>
        <dbReference type="Rhea" id="RHEA:21256"/>
        <dbReference type="ChEBI" id="CHEBI:43474"/>
        <dbReference type="ChEBI" id="CHEBI:57701"/>
        <dbReference type="ChEBI" id="CHEBI:58702"/>
        <dbReference type="ChEBI" id="CHEBI:145989"/>
        <dbReference type="EC" id="2.5.1.19"/>
    </reaction>
    <physiologicalReaction direction="left-to-right" evidence="1">
        <dbReference type="Rhea" id="RHEA:21257"/>
    </physiologicalReaction>
</comment>
<comment type="pathway">
    <text evidence="1">Metabolic intermediate biosynthesis; chorismate biosynthesis; chorismate from D-erythrose 4-phosphate and phosphoenolpyruvate: step 6/7.</text>
</comment>
<comment type="subunit">
    <text evidence="1">Monomer.</text>
</comment>
<comment type="subcellular location">
    <subcellularLocation>
        <location evidence="1">Cytoplasm</location>
    </subcellularLocation>
</comment>
<comment type="similarity">
    <text evidence="1">Belongs to the EPSP synthase family.</text>
</comment>